<dbReference type="EC" id="2.4.99.-"/>
<dbReference type="EMBL" id="AJ697663">
    <property type="protein sequence ID" value="CAG26901.1"/>
    <property type="molecule type" value="mRNA"/>
</dbReference>
<dbReference type="RefSeq" id="NP_001032373.1">
    <property type="nucleotide sequence ID" value="NM_001037296.1"/>
</dbReference>
<dbReference type="SMR" id="P61648"/>
<dbReference type="FunCoup" id="P61648">
    <property type="interactions" value="193"/>
</dbReference>
<dbReference type="STRING" id="9598.ENSPTRP00000003948"/>
<dbReference type="CAZy" id="GT29">
    <property type="family name" value="Glycosyltransferase Family 29"/>
</dbReference>
<dbReference type="GlyCosmos" id="P61648">
    <property type="glycosylation" value="4 sites, No reported glycans"/>
</dbReference>
<dbReference type="PaxDb" id="9598-ENSPTRP00000003948"/>
<dbReference type="Ensembl" id="ENSPTRT00000004279.5">
    <property type="protein sequence ID" value="ENSPTRP00000003948.4"/>
    <property type="gene ID" value="ENSPTRG00000002330.5"/>
</dbReference>
<dbReference type="GeneID" id="450329"/>
<dbReference type="KEGG" id="ptr:450329"/>
<dbReference type="CTD" id="338596"/>
<dbReference type="VGNC" id="VGNC:10457">
    <property type="gene designation" value="ST8SIA6"/>
</dbReference>
<dbReference type="eggNOG" id="KOG2692">
    <property type="taxonomic scope" value="Eukaryota"/>
</dbReference>
<dbReference type="GeneTree" id="ENSGT01030000234535"/>
<dbReference type="HOGENOM" id="CLU_048583_1_1_1"/>
<dbReference type="InParanoid" id="P61648"/>
<dbReference type="OMA" id="KKNIFHM"/>
<dbReference type="OrthoDB" id="3989at9604"/>
<dbReference type="TreeFam" id="TF323961"/>
<dbReference type="UniPathway" id="UPA00378"/>
<dbReference type="Proteomes" id="UP000002277">
    <property type="component" value="Chromosome 10"/>
</dbReference>
<dbReference type="Bgee" id="ENSPTRG00000002330">
    <property type="expression patterns" value="Expressed in lung and 6 other cell types or tissues"/>
</dbReference>
<dbReference type="GO" id="GO:0000139">
    <property type="term" value="C:Golgi membrane"/>
    <property type="evidence" value="ECO:0007669"/>
    <property type="project" value="UniProtKB-SubCell"/>
</dbReference>
<dbReference type="GO" id="GO:0003828">
    <property type="term" value="F:alpha-N-acetylneuraminate alpha-2,8-sialyltransferase activity"/>
    <property type="evidence" value="ECO:0000318"/>
    <property type="project" value="GO_Central"/>
</dbReference>
<dbReference type="GO" id="GO:0001835">
    <property type="term" value="P:blastocyst hatching"/>
    <property type="evidence" value="ECO:0007669"/>
    <property type="project" value="Ensembl"/>
</dbReference>
<dbReference type="GO" id="GO:0016051">
    <property type="term" value="P:carbohydrate biosynthetic process"/>
    <property type="evidence" value="ECO:0007669"/>
    <property type="project" value="Ensembl"/>
</dbReference>
<dbReference type="GO" id="GO:0001574">
    <property type="term" value="P:ganglioside biosynthetic process"/>
    <property type="evidence" value="ECO:0007669"/>
    <property type="project" value="Ensembl"/>
</dbReference>
<dbReference type="GO" id="GO:0006491">
    <property type="term" value="P:N-glycan processing"/>
    <property type="evidence" value="ECO:0000318"/>
    <property type="project" value="GO_Central"/>
</dbReference>
<dbReference type="GO" id="GO:0009311">
    <property type="term" value="P:oligosaccharide metabolic process"/>
    <property type="evidence" value="ECO:0000318"/>
    <property type="project" value="GO_Central"/>
</dbReference>
<dbReference type="GO" id="GO:0006486">
    <property type="term" value="P:protein glycosylation"/>
    <property type="evidence" value="ECO:0000318"/>
    <property type="project" value="GO_Central"/>
</dbReference>
<dbReference type="GO" id="GO:0006493">
    <property type="term" value="P:protein O-linked glycosylation"/>
    <property type="evidence" value="ECO:0007669"/>
    <property type="project" value="Ensembl"/>
</dbReference>
<dbReference type="CDD" id="cd23991">
    <property type="entry name" value="GT29_ST8SIA6"/>
    <property type="match status" value="1"/>
</dbReference>
<dbReference type="FunFam" id="3.90.1480.20:FF:000001">
    <property type="entry name" value="ST8 alpha-N-acetyl-neuraminide alpha-2,8-sialyltransferase 2"/>
    <property type="match status" value="1"/>
</dbReference>
<dbReference type="Gene3D" id="3.90.1480.20">
    <property type="entry name" value="Glycosyl transferase family 29"/>
    <property type="match status" value="1"/>
</dbReference>
<dbReference type="InterPro" id="IPR001675">
    <property type="entry name" value="Glyco_trans_29"/>
</dbReference>
<dbReference type="InterPro" id="IPR050943">
    <property type="entry name" value="Glycosyltr_29_Sialyltrsf"/>
</dbReference>
<dbReference type="InterPro" id="IPR038578">
    <property type="entry name" value="GT29-like_sf"/>
</dbReference>
<dbReference type="InterPro" id="IPR012163">
    <property type="entry name" value="Sialyl_trans"/>
</dbReference>
<dbReference type="PANTHER" id="PTHR11987">
    <property type="entry name" value="ALPHA-2,8-SIALYLTRANSFERASE"/>
    <property type="match status" value="1"/>
</dbReference>
<dbReference type="PANTHER" id="PTHR11987:SF29">
    <property type="entry name" value="ALPHA-2,8-SIALYLTRANSFERASE 8F"/>
    <property type="match status" value="1"/>
</dbReference>
<dbReference type="Pfam" id="PF00777">
    <property type="entry name" value="Glyco_transf_29"/>
    <property type="match status" value="1"/>
</dbReference>
<dbReference type="PIRSF" id="PIRSF005557">
    <property type="entry name" value="Sialyl_trans"/>
    <property type="match status" value="1"/>
</dbReference>
<accession>P61648</accession>
<sequence length="398" mass="44859">MRPGGALLALLASLLLLLLLRLLWCPADAPGRARILVEESREATHGTPAALRTLRSPATAVPRATNSTYLNEKSLHLTEKCKNLQYGIESFSNKTKGYSENDYLQIITDIQSCPWKRQAEEYANFRAKLASCCDAVQNFVVSQNNTPVGTNMSYEVESKKEIPIKKNIFHMFPVSQPFVDYPYNQCAVVGNGGILNKSLCGTEIDKSDFVFRCNLPPTTGDVSKDVGSKTNLVTINPSIITLKYGNLKEKKALFLEDIATYGEAFFLLPAFSFRANTGTSFKVYYTLEESKARQKVLFFHPKYLKDLALFWRTKGVTAYRLSTGLMITSVAVELCKNVKLYGFWPFSKTVEDIPVSHHYYDNKLPKHGFHQMPKEYSQILQLHMKGILKLQFSKCEVA</sequence>
<proteinExistence type="evidence at transcript level"/>
<feature type="chain" id="PRO_0000149301" description="Alpha-2,8-sialyltransferase 8F">
    <location>
        <begin position="1"/>
        <end position="398"/>
    </location>
</feature>
<feature type="topological domain" description="Cytoplasmic" evidence="3">
    <location>
        <begin position="1"/>
        <end position="3"/>
    </location>
</feature>
<feature type="transmembrane region" description="Helical; Signal-anchor for type II membrane protein" evidence="3">
    <location>
        <begin position="4"/>
        <end position="24"/>
    </location>
</feature>
<feature type="topological domain" description="Lumenal" evidence="3">
    <location>
        <begin position="25"/>
        <end position="398"/>
    </location>
</feature>
<feature type="active site" description="Proton donor/acceptor" evidence="1">
    <location>
        <position position="370"/>
    </location>
</feature>
<feature type="binding site" evidence="1">
    <location>
        <position position="214"/>
    </location>
    <ligand>
        <name>substrate</name>
    </ligand>
</feature>
<feature type="binding site" evidence="1">
    <location>
        <begin position="236"/>
        <end position="238"/>
    </location>
    <ligand>
        <name>substrate</name>
    </ligand>
</feature>
<feature type="binding site" evidence="1">
    <location>
        <begin position="322"/>
        <end position="324"/>
    </location>
    <ligand>
        <name>substrate</name>
    </ligand>
</feature>
<feature type="glycosylation site" description="N-linked (GlcNAc...) asparagine" evidence="3">
    <location>
        <position position="66"/>
    </location>
</feature>
<feature type="glycosylation site" description="N-linked (GlcNAc...) asparagine" evidence="3">
    <location>
        <position position="93"/>
    </location>
</feature>
<feature type="glycosylation site" description="N-linked (GlcNAc...) asparagine" evidence="3">
    <location>
        <position position="151"/>
    </location>
</feature>
<feature type="glycosylation site" description="N-linked (GlcNAc...) asparagine" evidence="3">
    <location>
        <position position="196"/>
    </location>
</feature>
<feature type="disulfide bond" evidence="1">
    <location>
        <begin position="186"/>
        <end position="335"/>
    </location>
</feature>
<feature type="disulfide bond" evidence="1">
    <location>
        <begin position="200"/>
        <end position="395"/>
    </location>
</feature>
<protein>
    <recommendedName>
        <fullName>Alpha-2,8-sialyltransferase 8F</fullName>
        <ecNumber>2.4.99.-</ecNumber>
    </recommendedName>
    <alternativeName>
        <fullName>Sialyltransferase 8F</fullName>
        <shortName>SIAT8-F</shortName>
    </alternativeName>
    <alternativeName>
        <fullName>Sialyltransferase St8Sia VI</fullName>
        <shortName>ST8SiaVI</shortName>
    </alternativeName>
</protein>
<organism>
    <name type="scientific">Pan troglodytes</name>
    <name type="common">Chimpanzee</name>
    <dbReference type="NCBI Taxonomy" id="9598"/>
    <lineage>
        <taxon>Eukaryota</taxon>
        <taxon>Metazoa</taxon>
        <taxon>Chordata</taxon>
        <taxon>Craniata</taxon>
        <taxon>Vertebrata</taxon>
        <taxon>Euteleostomi</taxon>
        <taxon>Mammalia</taxon>
        <taxon>Eutheria</taxon>
        <taxon>Euarchontoglires</taxon>
        <taxon>Primates</taxon>
        <taxon>Haplorrhini</taxon>
        <taxon>Catarrhini</taxon>
        <taxon>Hominidae</taxon>
        <taxon>Pan</taxon>
    </lineage>
</organism>
<gene>
    <name type="primary">ST8SIA6</name>
    <name type="synonym">SIAT8F</name>
</gene>
<evidence type="ECO:0000250" key="1">
    <source>
        <dbReference type="UniProtKB" id="O43173"/>
    </source>
</evidence>
<evidence type="ECO:0000250" key="2">
    <source>
        <dbReference type="UniProtKB" id="Q8K4T1"/>
    </source>
</evidence>
<evidence type="ECO:0000255" key="3"/>
<evidence type="ECO:0000305" key="4"/>
<comment type="function">
    <text evidence="2">Alpha-2,8-sialyltransferase that prefers O-glycans to N-glycans or glycolipids as acceptor substrates. The minimal acceptor substrate is the NeuAc-alpha-2,3(6)-Gal sequence at the non-reducing end of their carbohydrate groups.</text>
</comment>
<comment type="catalytic activity">
    <reaction evidence="2">
        <text>a ganglioside GM3 + CMP-N-acetyl-beta-neuraminate = a ganglioside GD3 + CMP + H(+)</text>
        <dbReference type="Rhea" id="RHEA:48288"/>
        <dbReference type="ChEBI" id="CHEBI:15378"/>
        <dbReference type="ChEBI" id="CHEBI:57812"/>
        <dbReference type="ChEBI" id="CHEBI:60377"/>
        <dbReference type="ChEBI" id="CHEBI:79210"/>
        <dbReference type="ChEBI" id="CHEBI:79214"/>
    </reaction>
</comment>
<comment type="catalytic activity">
    <reaction evidence="2">
        <text>a ganglioside GM3 (d18:1(4E)) + CMP-N-acetyl-beta-neuraminate = a ganglioside GD3 (d18:1(4E)) + CMP + H(+)</text>
        <dbReference type="Rhea" id="RHEA:41760"/>
        <dbReference type="ChEBI" id="CHEBI:15378"/>
        <dbReference type="ChEBI" id="CHEBI:57812"/>
        <dbReference type="ChEBI" id="CHEBI:60065"/>
        <dbReference type="ChEBI" id="CHEBI:60377"/>
        <dbReference type="ChEBI" id="CHEBI:78436"/>
    </reaction>
</comment>
<comment type="catalytic activity">
    <reaction evidence="2">
        <text>a ganglioside GD1a (d18:1(4E)) + CMP-N-acetyl-beta-neuraminate = a ganglioside GT1a (d18:1(4E)) + CMP + H(+)</text>
        <dbReference type="Rhea" id="RHEA:41768"/>
        <dbReference type="ChEBI" id="CHEBI:15378"/>
        <dbReference type="ChEBI" id="CHEBI:57812"/>
        <dbReference type="ChEBI" id="CHEBI:60377"/>
        <dbReference type="ChEBI" id="CHEBI:78445"/>
        <dbReference type="ChEBI" id="CHEBI:78447"/>
    </reaction>
</comment>
<comment type="catalytic activity">
    <reaction evidence="2">
        <text>a ganglioside GD1a + CMP-N-acetyl-beta-neuraminate = a ganglioside GT1a + CMP + H(+)</text>
        <dbReference type="Rhea" id="RHEA:48912"/>
        <dbReference type="ChEBI" id="CHEBI:15378"/>
        <dbReference type="ChEBI" id="CHEBI:57812"/>
        <dbReference type="ChEBI" id="CHEBI:60377"/>
        <dbReference type="ChEBI" id="CHEBI:82637"/>
        <dbReference type="ChEBI" id="CHEBI:90501"/>
    </reaction>
</comment>
<comment type="catalytic activity">
    <reaction evidence="2">
        <text>a ganglioside GM1b (d18:1(4E)) + CMP-N-acetyl-beta-neuraminate = a ganglioside GD1c (d18:1(4E)) + CMP + H(+)</text>
        <dbReference type="Rhea" id="RHEA:47576"/>
        <dbReference type="ChEBI" id="CHEBI:15378"/>
        <dbReference type="ChEBI" id="CHEBI:57812"/>
        <dbReference type="ChEBI" id="CHEBI:60377"/>
        <dbReference type="ChEBI" id="CHEBI:78568"/>
        <dbReference type="ChEBI" id="CHEBI:87787"/>
    </reaction>
</comment>
<comment type="catalytic activity">
    <reaction evidence="2">
        <text>a ganglioside GM1b + CMP-N-acetyl-beta-neuraminate = a ganglioside GD1c + CMP + H(+)</text>
        <dbReference type="Rhea" id="RHEA:48916"/>
        <dbReference type="ChEBI" id="CHEBI:15378"/>
        <dbReference type="ChEBI" id="CHEBI:57812"/>
        <dbReference type="ChEBI" id="CHEBI:60377"/>
        <dbReference type="ChEBI" id="CHEBI:90151"/>
        <dbReference type="ChEBI" id="CHEBI:90856"/>
    </reaction>
</comment>
<comment type="catalytic activity">
    <reaction evidence="2">
        <text>a ganglioside GM4 (d18:1(4E)) + CMP-N-acetyl-beta-neuraminate = an N-acetyl-alpha-neuraminosyl-(2-&gt;8)-N-acetyl-alpha-neuraminosyl-(2-&gt;3)-beta-D-galactosyl-(1&lt;-&gt;1')-N-acylsphing-4-enine + CMP + H(+)</text>
        <dbReference type="Rhea" id="RHEA:48924"/>
        <dbReference type="ChEBI" id="CHEBI:15378"/>
        <dbReference type="ChEBI" id="CHEBI:57812"/>
        <dbReference type="ChEBI" id="CHEBI:60377"/>
        <dbReference type="ChEBI" id="CHEBI:78482"/>
        <dbReference type="ChEBI" id="CHEBI:90858"/>
    </reaction>
</comment>
<comment type="catalytic activity">
    <reaction evidence="2">
        <text>N-acetyl-alpha-neuraminosyl-(2-&gt;3)-beta-D-galactosyl-(1&lt;-&gt;1')-ceramide + CMP-N-acetyl-beta-neuraminate = N-acetyl-alpha-neuraminosyl-(2-&gt;8)-N-acetyl-alpha-neuraminosyl-(2-&gt;3)-beta-D-galactosyl-(1&lt;-&gt;1')-ceramide + CMP + H(+)</text>
        <dbReference type="Rhea" id="RHEA:48928"/>
        <dbReference type="ChEBI" id="CHEBI:15378"/>
        <dbReference type="ChEBI" id="CHEBI:57812"/>
        <dbReference type="ChEBI" id="CHEBI:60377"/>
        <dbReference type="ChEBI" id="CHEBI:82643"/>
        <dbReference type="ChEBI" id="CHEBI:90859"/>
    </reaction>
</comment>
<comment type="catalytic activity">
    <reaction evidence="2">
        <text>a ganglioside GT1b (d18:1(4E)) + CMP-N-acetyl-beta-neuraminate = a ganglioside GQ1b (d18:1(4E)) + CMP + H(+)</text>
        <dbReference type="Rhea" id="RHEA:41772"/>
        <dbReference type="ChEBI" id="CHEBI:15378"/>
        <dbReference type="ChEBI" id="CHEBI:57812"/>
        <dbReference type="ChEBI" id="CHEBI:60377"/>
        <dbReference type="ChEBI" id="CHEBI:78452"/>
        <dbReference type="ChEBI" id="CHEBI:78455"/>
    </reaction>
</comment>
<comment type="catalytic activity">
    <reaction evidence="2">
        <text>a ganglioside GT1b + CMP-N-acetyl-beta-neuraminate = a ganglioside GQ1b + CMP + H(+)</text>
        <dbReference type="Rhea" id="RHEA:48932"/>
        <dbReference type="ChEBI" id="CHEBI:15378"/>
        <dbReference type="ChEBI" id="CHEBI:57812"/>
        <dbReference type="ChEBI" id="CHEBI:60377"/>
        <dbReference type="ChEBI" id="CHEBI:82940"/>
        <dbReference type="ChEBI" id="CHEBI:90862"/>
    </reaction>
</comment>
<comment type="pathway">
    <text>Protein modification; protein glycosylation.</text>
</comment>
<comment type="subcellular location">
    <subcellularLocation>
        <location evidence="4">Golgi apparatus membrane</location>
        <topology evidence="4">Single-pass type II membrane protein</topology>
    </subcellularLocation>
</comment>
<comment type="similarity">
    <text evidence="4">Belongs to the glycosyltransferase 29 family.</text>
</comment>
<keyword id="KW-1015">Disulfide bond</keyword>
<keyword id="KW-0325">Glycoprotein</keyword>
<keyword id="KW-0328">Glycosyltransferase</keyword>
<keyword id="KW-0333">Golgi apparatus</keyword>
<keyword id="KW-0443">Lipid metabolism</keyword>
<keyword id="KW-0472">Membrane</keyword>
<keyword id="KW-1185">Reference proteome</keyword>
<keyword id="KW-0735">Signal-anchor</keyword>
<keyword id="KW-0808">Transferase</keyword>
<keyword id="KW-0812">Transmembrane</keyword>
<keyword id="KW-1133">Transmembrane helix</keyword>
<reference key="1">
    <citation type="submission" date="2004-04" db="EMBL/GenBank/DDBJ databases">
        <title>Phylogeny of sialyltransferases.</title>
        <authorList>
            <person name="Harduin-Lepers A."/>
            <person name="Martinez-Duncker I."/>
            <person name="Mollicone R."/>
            <person name="Delannoy P."/>
            <person name="Oriol R."/>
        </authorList>
    </citation>
    <scope>NUCLEOTIDE SEQUENCE [MRNA]</scope>
</reference>
<name>SIA8F_PANTR</name>